<reference key="1">
    <citation type="submission" date="2002-07" db="EMBL/GenBank/DDBJ databases">
        <title>Parsing out signal and noise for seed-plant phylogenetic inference.</title>
        <authorList>
            <person name="Graham S.W."/>
            <person name="Rai H.S."/>
            <person name="Ikegami K."/>
            <person name="Reeves P.A."/>
            <person name="Olmstead R.G."/>
        </authorList>
    </citation>
    <scope>NUCLEOTIDE SEQUENCE [GENOMIC DNA]</scope>
</reference>
<organism>
    <name type="scientific">Stewartia pseudocamellia</name>
    <name type="common">Japanese stewartia</name>
    <name type="synonym">Stewartia koreana</name>
    <dbReference type="NCBI Taxonomy" id="59679"/>
    <lineage>
        <taxon>Eukaryota</taxon>
        <taxon>Viridiplantae</taxon>
        <taxon>Streptophyta</taxon>
        <taxon>Embryophyta</taxon>
        <taxon>Tracheophyta</taxon>
        <taxon>Spermatophyta</taxon>
        <taxon>Magnoliopsida</taxon>
        <taxon>eudicotyledons</taxon>
        <taxon>Gunneridae</taxon>
        <taxon>Pentapetalae</taxon>
        <taxon>asterids</taxon>
        <taxon>Ericales</taxon>
        <taxon>Theaceae</taxon>
        <taxon>Stewartia</taxon>
    </lineage>
</organism>
<protein>
    <recommendedName>
        <fullName evidence="1">Protein PsbN</fullName>
    </recommendedName>
</protein>
<sequence length="43" mass="4722">METATLVAIFISGLLVSFTGYALYTAFGQPSQQLRDPFEEHGD</sequence>
<proteinExistence type="inferred from homology"/>
<name>PSBN_STEPS</name>
<feature type="chain" id="PRO_0000207961" description="Protein PsbN">
    <location>
        <begin position="1"/>
        <end position="43"/>
    </location>
</feature>
<feature type="transmembrane region" description="Helical" evidence="1">
    <location>
        <begin position="7"/>
        <end position="27"/>
    </location>
</feature>
<evidence type="ECO:0000255" key="1">
    <source>
        <dbReference type="HAMAP-Rule" id="MF_00293"/>
    </source>
</evidence>
<comment type="function">
    <text evidence="1">May play a role in photosystem I and II biogenesis.</text>
</comment>
<comment type="subcellular location">
    <subcellularLocation>
        <location evidence="1">Plastid</location>
        <location evidence="1">Chloroplast thylakoid membrane</location>
        <topology evidence="1">Single-pass membrane protein</topology>
    </subcellularLocation>
</comment>
<comment type="similarity">
    <text evidence="1">Belongs to the PsbN family.</text>
</comment>
<comment type="caution">
    <text evidence="1">Originally thought to be a component of PSII; based on experiments in Synechocystis, N.tabacum and barley, and its absence from PSII in T.elongatus and T.vulcanus, this is probably not true.</text>
</comment>
<accession>Q6EYD5</accession>
<dbReference type="EMBL" id="AF528913">
    <property type="protein sequence ID" value="AAQ09438.1"/>
    <property type="molecule type" value="Genomic_DNA"/>
</dbReference>
<dbReference type="RefSeq" id="YP_009418648.1">
    <property type="nucleotide sequence ID" value="NC_035697.1"/>
</dbReference>
<dbReference type="SMR" id="Q6EYD5"/>
<dbReference type="GeneID" id="33907914"/>
<dbReference type="GO" id="GO:0009535">
    <property type="term" value="C:chloroplast thylakoid membrane"/>
    <property type="evidence" value="ECO:0007669"/>
    <property type="project" value="UniProtKB-SubCell"/>
</dbReference>
<dbReference type="GO" id="GO:0015979">
    <property type="term" value="P:photosynthesis"/>
    <property type="evidence" value="ECO:0007669"/>
    <property type="project" value="InterPro"/>
</dbReference>
<dbReference type="HAMAP" id="MF_00293">
    <property type="entry name" value="PSII_PsbN"/>
    <property type="match status" value="1"/>
</dbReference>
<dbReference type="InterPro" id="IPR003398">
    <property type="entry name" value="PSII_PsbN"/>
</dbReference>
<dbReference type="PANTHER" id="PTHR35326">
    <property type="entry name" value="PROTEIN PSBN"/>
    <property type="match status" value="1"/>
</dbReference>
<dbReference type="PANTHER" id="PTHR35326:SF3">
    <property type="entry name" value="PROTEIN PSBN"/>
    <property type="match status" value="1"/>
</dbReference>
<dbReference type="Pfam" id="PF02468">
    <property type="entry name" value="PsbN"/>
    <property type="match status" value="1"/>
</dbReference>
<keyword id="KW-0150">Chloroplast</keyword>
<keyword id="KW-0472">Membrane</keyword>
<keyword id="KW-0934">Plastid</keyword>
<keyword id="KW-0793">Thylakoid</keyword>
<keyword id="KW-0812">Transmembrane</keyword>
<keyword id="KW-1133">Transmembrane helix</keyword>
<geneLocation type="chloroplast"/>
<gene>
    <name evidence="1" type="primary">psbN</name>
</gene>